<organism>
    <name type="scientific">Nocardia farcinica (strain IFM 10152)</name>
    <dbReference type="NCBI Taxonomy" id="247156"/>
    <lineage>
        <taxon>Bacteria</taxon>
        <taxon>Bacillati</taxon>
        <taxon>Actinomycetota</taxon>
        <taxon>Actinomycetes</taxon>
        <taxon>Mycobacteriales</taxon>
        <taxon>Nocardiaceae</taxon>
        <taxon>Nocardia</taxon>
    </lineage>
</organism>
<accession>Q5Z3K9</accession>
<sequence>MIDLRLLREDPDAVRASQRARGEDPALVDALLEADAARRAAVATADNLRAEQKAMSKQIGKAPKEERSALLARAQELSVKVKEAEAAQHAADADLDAAHRALSNVVLPAVPAGGEDDYVVLETVGTPPEFDFEPKDHLELGEALGLMDMERGAKVSGSRFYFLTGHGALLQLGLLQLAAQKAVANGFTMMIPPVLVRPEVMAGTGFLGRHAAEVYHLADDDMYLVGTSEVPLAGYHADEILDLSAGPKRYAGWSSCFRREAGSYGKDTRGIIRVHQFDKVEMFVYTTPDQAEAEHERLLAWEREMLAAIEVPYRIIDVAAGDLGSSAARKFDCEAWVPSQQTYRELTSTSNCTTFQARRLSVRYRDENGKPQIAATLNGTLATTRWIVAILENHQRADGSVRVPAALVPFVGTDVLRPPA</sequence>
<dbReference type="EC" id="6.1.1.11" evidence="1"/>
<dbReference type="EMBL" id="AP006618">
    <property type="protein sequence ID" value="BAD54982.1"/>
    <property type="molecule type" value="Genomic_DNA"/>
</dbReference>
<dbReference type="RefSeq" id="WP_011206669.1">
    <property type="nucleotide sequence ID" value="NC_006361.1"/>
</dbReference>
<dbReference type="SMR" id="Q5Z3K9"/>
<dbReference type="STRING" id="247156.NFA_1400"/>
<dbReference type="GeneID" id="61130982"/>
<dbReference type="KEGG" id="nfa:NFA_1400"/>
<dbReference type="eggNOG" id="COG0172">
    <property type="taxonomic scope" value="Bacteria"/>
</dbReference>
<dbReference type="HOGENOM" id="CLU_023797_0_1_11"/>
<dbReference type="OrthoDB" id="9804647at2"/>
<dbReference type="UniPathway" id="UPA00906">
    <property type="reaction ID" value="UER00895"/>
</dbReference>
<dbReference type="Proteomes" id="UP000006820">
    <property type="component" value="Chromosome"/>
</dbReference>
<dbReference type="GO" id="GO:0005737">
    <property type="term" value="C:cytoplasm"/>
    <property type="evidence" value="ECO:0007669"/>
    <property type="project" value="UniProtKB-SubCell"/>
</dbReference>
<dbReference type="GO" id="GO:0005524">
    <property type="term" value="F:ATP binding"/>
    <property type="evidence" value="ECO:0007669"/>
    <property type="project" value="UniProtKB-UniRule"/>
</dbReference>
<dbReference type="GO" id="GO:0004828">
    <property type="term" value="F:serine-tRNA ligase activity"/>
    <property type="evidence" value="ECO:0007669"/>
    <property type="project" value="UniProtKB-UniRule"/>
</dbReference>
<dbReference type="GO" id="GO:0016260">
    <property type="term" value="P:selenocysteine biosynthetic process"/>
    <property type="evidence" value="ECO:0007669"/>
    <property type="project" value="UniProtKB-UniRule"/>
</dbReference>
<dbReference type="GO" id="GO:0006434">
    <property type="term" value="P:seryl-tRNA aminoacylation"/>
    <property type="evidence" value="ECO:0007669"/>
    <property type="project" value="UniProtKB-UniRule"/>
</dbReference>
<dbReference type="CDD" id="cd00770">
    <property type="entry name" value="SerRS_core"/>
    <property type="match status" value="1"/>
</dbReference>
<dbReference type="FunFam" id="1.10.287.40:FF:000004">
    <property type="entry name" value="Serine--tRNA ligase"/>
    <property type="match status" value="1"/>
</dbReference>
<dbReference type="FunFam" id="3.30.930.10:FF:000048">
    <property type="entry name" value="Serine--tRNA ligase"/>
    <property type="match status" value="1"/>
</dbReference>
<dbReference type="Gene3D" id="3.30.930.10">
    <property type="entry name" value="Bira Bifunctional Protein, Domain 2"/>
    <property type="match status" value="1"/>
</dbReference>
<dbReference type="Gene3D" id="1.10.287.40">
    <property type="entry name" value="Serine-tRNA synthetase, tRNA binding domain"/>
    <property type="match status" value="1"/>
</dbReference>
<dbReference type="HAMAP" id="MF_00176">
    <property type="entry name" value="Ser_tRNA_synth_type1"/>
    <property type="match status" value="1"/>
</dbReference>
<dbReference type="InterPro" id="IPR002314">
    <property type="entry name" value="aa-tRNA-synt_IIb"/>
</dbReference>
<dbReference type="InterPro" id="IPR006195">
    <property type="entry name" value="aa-tRNA-synth_II"/>
</dbReference>
<dbReference type="InterPro" id="IPR045864">
    <property type="entry name" value="aa-tRNA-synth_II/BPL/LPL"/>
</dbReference>
<dbReference type="InterPro" id="IPR002317">
    <property type="entry name" value="Ser-tRNA-ligase_type_1"/>
</dbReference>
<dbReference type="InterPro" id="IPR015866">
    <property type="entry name" value="Ser-tRNA-synth_1_N"/>
</dbReference>
<dbReference type="InterPro" id="IPR042103">
    <property type="entry name" value="SerRS_1_N_sf"/>
</dbReference>
<dbReference type="InterPro" id="IPR033729">
    <property type="entry name" value="SerRS_core"/>
</dbReference>
<dbReference type="InterPro" id="IPR010978">
    <property type="entry name" value="tRNA-bd_arm"/>
</dbReference>
<dbReference type="NCBIfam" id="TIGR00414">
    <property type="entry name" value="serS"/>
    <property type="match status" value="1"/>
</dbReference>
<dbReference type="PANTHER" id="PTHR11778">
    <property type="entry name" value="SERYL-TRNA SYNTHETASE"/>
    <property type="match status" value="1"/>
</dbReference>
<dbReference type="Pfam" id="PF02403">
    <property type="entry name" value="Seryl_tRNA_N"/>
    <property type="match status" value="1"/>
</dbReference>
<dbReference type="Pfam" id="PF00587">
    <property type="entry name" value="tRNA-synt_2b"/>
    <property type="match status" value="1"/>
</dbReference>
<dbReference type="PIRSF" id="PIRSF001529">
    <property type="entry name" value="Ser-tRNA-synth_IIa"/>
    <property type="match status" value="1"/>
</dbReference>
<dbReference type="PRINTS" id="PR00981">
    <property type="entry name" value="TRNASYNTHSER"/>
</dbReference>
<dbReference type="SUPFAM" id="SSF55681">
    <property type="entry name" value="Class II aaRS and biotin synthetases"/>
    <property type="match status" value="1"/>
</dbReference>
<dbReference type="SUPFAM" id="SSF46589">
    <property type="entry name" value="tRNA-binding arm"/>
    <property type="match status" value="1"/>
</dbReference>
<dbReference type="PROSITE" id="PS50862">
    <property type="entry name" value="AA_TRNA_LIGASE_II"/>
    <property type="match status" value="1"/>
</dbReference>
<reference key="1">
    <citation type="journal article" date="2004" name="Proc. Natl. Acad. Sci. U.S.A.">
        <title>The complete genomic sequence of Nocardia farcinica IFM 10152.</title>
        <authorList>
            <person name="Ishikawa J."/>
            <person name="Yamashita A."/>
            <person name="Mikami Y."/>
            <person name="Hoshino Y."/>
            <person name="Kurita H."/>
            <person name="Hotta K."/>
            <person name="Shiba T."/>
            <person name="Hattori M."/>
        </authorList>
    </citation>
    <scope>NUCLEOTIDE SEQUENCE [LARGE SCALE GENOMIC DNA]</scope>
    <source>
        <strain>IFM 10152</strain>
    </source>
</reference>
<protein>
    <recommendedName>
        <fullName evidence="1">Serine--tRNA ligase</fullName>
        <ecNumber evidence="1">6.1.1.11</ecNumber>
    </recommendedName>
    <alternativeName>
        <fullName evidence="1">Seryl-tRNA synthetase</fullName>
        <shortName evidence="1">SerRS</shortName>
    </alternativeName>
    <alternativeName>
        <fullName evidence="1">Seryl-tRNA(Ser/Sec) synthetase</fullName>
    </alternativeName>
</protein>
<gene>
    <name evidence="1" type="primary">serS</name>
    <name type="ordered locus">NFA_1400</name>
</gene>
<feature type="chain" id="PRO_0000122092" description="Serine--tRNA ligase">
    <location>
        <begin position="1"/>
        <end position="420"/>
    </location>
</feature>
<feature type="binding site" evidence="1">
    <location>
        <begin position="227"/>
        <end position="229"/>
    </location>
    <ligand>
        <name>L-serine</name>
        <dbReference type="ChEBI" id="CHEBI:33384"/>
    </ligand>
</feature>
<feature type="binding site" evidence="1">
    <location>
        <begin position="258"/>
        <end position="260"/>
    </location>
    <ligand>
        <name>ATP</name>
        <dbReference type="ChEBI" id="CHEBI:30616"/>
    </ligand>
</feature>
<feature type="binding site" evidence="1">
    <location>
        <position position="274"/>
    </location>
    <ligand>
        <name>ATP</name>
        <dbReference type="ChEBI" id="CHEBI:30616"/>
    </ligand>
</feature>
<feature type="binding site" evidence="1">
    <location>
        <position position="281"/>
    </location>
    <ligand>
        <name>L-serine</name>
        <dbReference type="ChEBI" id="CHEBI:33384"/>
    </ligand>
</feature>
<feature type="binding site" evidence="1">
    <location>
        <begin position="345"/>
        <end position="348"/>
    </location>
    <ligand>
        <name>ATP</name>
        <dbReference type="ChEBI" id="CHEBI:30616"/>
    </ligand>
</feature>
<feature type="binding site" evidence="1">
    <location>
        <position position="380"/>
    </location>
    <ligand>
        <name>L-serine</name>
        <dbReference type="ChEBI" id="CHEBI:33384"/>
    </ligand>
</feature>
<keyword id="KW-0030">Aminoacyl-tRNA synthetase</keyword>
<keyword id="KW-0067">ATP-binding</keyword>
<keyword id="KW-0963">Cytoplasm</keyword>
<keyword id="KW-0436">Ligase</keyword>
<keyword id="KW-0547">Nucleotide-binding</keyword>
<keyword id="KW-0648">Protein biosynthesis</keyword>
<keyword id="KW-1185">Reference proteome</keyword>
<name>SYS_NOCFA</name>
<evidence type="ECO:0000255" key="1">
    <source>
        <dbReference type="HAMAP-Rule" id="MF_00176"/>
    </source>
</evidence>
<comment type="function">
    <text evidence="1">Catalyzes the attachment of serine to tRNA(Ser). Is also able to aminoacylate tRNA(Sec) with serine, to form the misacylated tRNA L-seryl-tRNA(Sec), which will be further converted into selenocysteinyl-tRNA(Sec).</text>
</comment>
<comment type="catalytic activity">
    <reaction evidence="1">
        <text>tRNA(Ser) + L-serine + ATP = L-seryl-tRNA(Ser) + AMP + diphosphate + H(+)</text>
        <dbReference type="Rhea" id="RHEA:12292"/>
        <dbReference type="Rhea" id="RHEA-COMP:9669"/>
        <dbReference type="Rhea" id="RHEA-COMP:9703"/>
        <dbReference type="ChEBI" id="CHEBI:15378"/>
        <dbReference type="ChEBI" id="CHEBI:30616"/>
        <dbReference type="ChEBI" id="CHEBI:33019"/>
        <dbReference type="ChEBI" id="CHEBI:33384"/>
        <dbReference type="ChEBI" id="CHEBI:78442"/>
        <dbReference type="ChEBI" id="CHEBI:78533"/>
        <dbReference type="ChEBI" id="CHEBI:456215"/>
        <dbReference type="EC" id="6.1.1.11"/>
    </reaction>
</comment>
<comment type="catalytic activity">
    <reaction evidence="1">
        <text>tRNA(Sec) + L-serine + ATP = L-seryl-tRNA(Sec) + AMP + diphosphate + H(+)</text>
        <dbReference type="Rhea" id="RHEA:42580"/>
        <dbReference type="Rhea" id="RHEA-COMP:9742"/>
        <dbReference type="Rhea" id="RHEA-COMP:10128"/>
        <dbReference type="ChEBI" id="CHEBI:15378"/>
        <dbReference type="ChEBI" id="CHEBI:30616"/>
        <dbReference type="ChEBI" id="CHEBI:33019"/>
        <dbReference type="ChEBI" id="CHEBI:33384"/>
        <dbReference type="ChEBI" id="CHEBI:78442"/>
        <dbReference type="ChEBI" id="CHEBI:78533"/>
        <dbReference type="ChEBI" id="CHEBI:456215"/>
        <dbReference type="EC" id="6.1.1.11"/>
    </reaction>
</comment>
<comment type="pathway">
    <text evidence="1">Aminoacyl-tRNA biosynthesis; selenocysteinyl-tRNA(Sec) biosynthesis; L-seryl-tRNA(Sec) from L-serine and tRNA(Sec): step 1/1.</text>
</comment>
<comment type="subunit">
    <text evidence="1">Homodimer. The tRNA molecule binds across the dimer.</text>
</comment>
<comment type="subcellular location">
    <subcellularLocation>
        <location evidence="1">Cytoplasm</location>
    </subcellularLocation>
</comment>
<comment type="domain">
    <text evidence="1">Consists of two distinct domains, a catalytic core and a N-terminal extension that is involved in tRNA binding.</text>
</comment>
<comment type="similarity">
    <text evidence="1">Belongs to the class-II aminoacyl-tRNA synthetase family. Type-1 seryl-tRNA synthetase subfamily.</text>
</comment>
<proteinExistence type="inferred from homology"/>